<gene>
    <name type="primary">B2M</name>
</gene>
<dbReference type="EMBL" id="AF068763">
    <property type="protein sequence ID" value="AAD17564.1"/>
    <property type="molecule type" value="Genomic_DNA"/>
</dbReference>
<dbReference type="EMBL" id="AF068762">
    <property type="protein sequence ID" value="AAD17564.1"/>
    <property type="status" value="JOINED"/>
    <property type="molecule type" value="Genomic_DNA"/>
</dbReference>
<dbReference type="SMR" id="Q71UN7"/>
<dbReference type="GO" id="GO:0005576">
    <property type="term" value="C:extracellular region"/>
    <property type="evidence" value="ECO:0007669"/>
    <property type="project" value="UniProtKB-SubCell"/>
</dbReference>
<dbReference type="GO" id="GO:0042612">
    <property type="term" value="C:MHC class I protein complex"/>
    <property type="evidence" value="ECO:0007669"/>
    <property type="project" value="UniProtKB-KW"/>
</dbReference>
<dbReference type="GO" id="GO:0002474">
    <property type="term" value="P:antigen processing and presentation of peptide antigen via MHC class I"/>
    <property type="evidence" value="ECO:0007669"/>
    <property type="project" value="UniProtKB-KW"/>
</dbReference>
<dbReference type="GO" id="GO:0006955">
    <property type="term" value="P:immune response"/>
    <property type="evidence" value="ECO:0007669"/>
    <property type="project" value="InterPro"/>
</dbReference>
<dbReference type="CDD" id="cd05770">
    <property type="entry name" value="IgC1_beta2m"/>
    <property type="match status" value="1"/>
</dbReference>
<dbReference type="FunFam" id="2.60.40.10:FF:001005">
    <property type="entry name" value="Beta-2-microglobulin"/>
    <property type="match status" value="1"/>
</dbReference>
<dbReference type="Gene3D" id="2.60.40.10">
    <property type="entry name" value="Immunoglobulins"/>
    <property type="match status" value="1"/>
</dbReference>
<dbReference type="InterPro" id="IPR015707">
    <property type="entry name" value="B2Microglobulin"/>
</dbReference>
<dbReference type="InterPro" id="IPR007110">
    <property type="entry name" value="Ig-like_dom"/>
</dbReference>
<dbReference type="InterPro" id="IPR036179">
    <property type="entry name" value="Ig-like_dom_sf"/>
</dbReference>
<dbReference type="InterPro" id="IPR013783">
    <property type="entry name" value="Ig-like_fold"/>
</dbReference>
<dbReference type="InterPro" id="IPR003006">
    <property type="entry name" value="Ig/MHC_CS"/>
</dbReference>
<dbReference type="InterPro" id="IPR003597">
    <property type="entry name" value="Ig_C1-set"/>
</dbReference>
<dbReference type="InterPro" id="IPR050160">
    <property type="entry name" value="MHC/Immunoglobulin"/>
</dbReference>
<dbReference type="PANTHER" id="PTHR19944:SF62">
    <property type="entry name" value="BETA-2-MICROGLOBULIN"/>
    <property type="match status" value="1"/>
</dbReference>
<dbReference type="PANTHER" id="PTHR19944">
    <property type="entry name" value="MHC CLASS II-RELATED"/>
    <property type="match status" value="1"/>
</dbReference>
<dbReference type="Pfam" id="PF07654">
    <property type="entry name" value="C1-set"/>
    <property type="match status" value="1"/>
</dbReference>
<dbReference type="SMART" id="SM00407">
    <property type="entry name" value="IGc1"/>
    <property type="match status" value="1"/>
</dbReference>
<dbReference type="SUPFAM" id="SSF48726">
    <property type="entry name" value="Immunoglobulin"/>
    <property type="match status" value="1"/>
</dbReference>
<dbReference type="PROSITE" id="PS50835">
    <property type="entry name" value="IG_LIKE"/>
    <property type="match status" value="1"/>
</dbReference>
<dbReference type="PROSITE" id="PS00290">
    <property type="entry name" value="IG_MHC"/>
    <property type="match status" value="1"/>
</dbReference>
<keyword id="KW-1015">Disulfide bond</keyword>
<keyword id="KW-0391">Immunity</keyword>
<keyword id="KW-0393">Immunoglobulin domain</keyword>
<keyword id="KW-0490">MHC I</keyword>
<keyword id="KW-0964">Secreted</keyword>
<keyword id="KW-0732">Signal</keyword>
<sequence>MARSVVAALLVLLSLSGLEAIQHAPKIQVYSRHPAENGKPNYLNCYVSGFHPSDIEVDLLKNGQKIENVEHSDLSFSKDWSFYLLYYTEFTPNEKDEYACRVSHVTFPTPKTVKWDRNM</sequence>
<accession>Q71UN7</accession>
<organism>
    <name type="scientific">Saimiri ustus</name>
    <name type="common">Golden-backed squirrel monkey</name>
    <dbReference type="NCBI Taxonomy" id="66265"/>
    <lineage>
        <taxon>Eukaryota</taxon>
        <taxon>Metazoa</taxon>
        <taxon>Chordata</taxon>
        <taxon>Craniata</taxon>
        <taxon>Vertebrata</taxon>
        <taxon>Euteleostomi</taxon>
        <taxon>Mammalia</taxon>
        <taxon>Eutheria</taxon>
        <taxon>Euarchontoglires</taxon>
        <taxon>Primates</taxon>
        <taxon>Haplorrhini</taxon>
        <taxon>Platyrrhini</taxon>
        <taxon>Cebidae</taxon>
        <taxon>Saimiriinae</taxon>
        <taxon>Saimiri</taxon>
    </lineage>
</organism>
<reference key="1">
    <citation type="journal article" date="1999" name="Mol. Phylogenet. Evol.">
        <title>Molecular phylogeny of new world primates (Platyrrhini) based on beta2-microglobulin DNA sequences.</title>
        <authorList>
            <person name="Canavez F.C."/>
            <person name="Moreira M.A."/>
            <person name="Ladasky J.J."/>
            <person name="Pissinatti A."/>
            <person name="Parham P."/>
            <person name="Seuanez H.N."/>
        </authorList>
    </citation>
    <scope>NUCLEOTIDE SEQUENCE [GENOMIC DNA]</scope>
</reference>
<protein>
    <recommendedName>
        <fullName>Beta-2-microglobulin</fullName>
    </recommendedName>
</protein>
<comment type="function">
    <text evidence="1">Component of the class I major histocompatibility complex (MHC). Involved in the presentation of peptide antigens to the immune system (By similarity).</text>
</comment>
<comment type="subunit">
    <text evidence="1">Heterodimer of an alpha chain and a beta chain. Beta-2-microglobulin is the beta-chain of major histocompatibility complex class I molecules (By similarity).</text>
</comment>
<comment type="subcellular location">
    <subcellularLocation>
        <location evidence="1">Secreted</location>
    </subcellularLocation>
</comment>
<comment type="similarity">
    <text evidence="3">Belongs to the beta-2-microglobulin family.</text>
</comment>
<name>B2MG_SAIUS</name>
<feature type="signal peptide" evidence="1">
    <location>
        <begin position="1"/>
        <end position="20"/>
    </location>
</feature>
<feature type="chain" id="PRO_0000018801" description="Beta-2-microglobulin">
    <location>
        <begin position="21"/>
        <end position="119"/>
    </location>
</feature>
<feature type="domain" description="Ig-like C1-type">
    <location>
        <begin position="25"/>
        <end position="114"/>
    </location>
</feature>
<feature type="disulfide bond" evidence="2">
    <location>
        <begin position="45"/>
        <end position="100"/>
    </location>
</feature>
<proteinExistence type="inferred from homology"/>
<evidence type="ECO:0000250" key="1"/>
<evidence type="ECO:0000255" key="2">
    <source>
        <dbReference type="PROSITE-ProRule" id="PRU00114"/>
    </source>
</evidence>
<evidence type="ECO:0000305" key="3"/>